<name>FOXO_CAEEL</name>
<proteinExistence type="evidence at protein level"/>
<keyword id="KW-0025">Alternative splicing</keyword>
<keyword id="KW-0963">Cytoplasm</keyword>
<keyword id="KW-0217">Developmental protein</keyword>
<keyword id="KW-0238">DNA-binding</keyword>
<keyword id="KW-0341">Growth regulation</keyword>
<keyword id="KW-0391">Immunity</keyword>
<keyword id="KW-0399">Innate immunity</keyword>
<keyword id="KW-0539">Nucleus</keyword>
<keyword id="KW-0597">Phosphoprotein</keyword>
<keyword id="KW-1185">Reference proteome</keyword>
<keyword id="KW-0678">Repressor</keyword>
<keyword id="KW-0346">Stress response</keyword>
<keyword id="KW-0804">Transcription</keyword>
<keyword id="KW-0805">Transcription regulation</keyword>
<keyword id="KW-0832">Ubl conjugation</keyword>
<evidence type="ECO:0000255" key="1">
    <source>
        <dbReference type="PROSITE-ProRule" id="PRU00089"/>
    </source>
</evidence>
<evidence type="ECO:0000256" key="2">
    <source>
        <dbReference type="SAM" id="MobiDB-lite"/>
    </source>
</evidence>
<evidence type="ECO:0000269" key="3">
    <source>
    </source>
</evidence>
<evidence type="ECO:0000269" key="4">
    <source>
    </source>
</evidence>
<evidence type="ECO:0000269" key="5">
    <source>
    </source>
</evidence>
<evidence type="ECO:0000269" key="6">
    <source>
    </source>
</evidence>
<evidence type="ECO:0000269" key="7">
    <source>
    </source>
</evidence>
<evidence type="ECO:0000269" key="8">
    <source>
    </source>
</evidence>
<evidence type="ECO:0000269" key="9">
    <source>
    </source>
</evidence>
<evidence type="ECO:0000269" key="10">
    <source>
    </source>
</evidence>
<evidence type="ECO:0000269" key="11">
    <source>
    </source>
</evidence>
<evidence type="ECO:0000269" key="12">
    <source>
    </source>
</evidence>
<evidence type="ECO:0000269" key="13">
    <source>
    </source>
</evidence>
<evidence type="ECO:0000269" key="14">
    <source>
    </source>
</evidence>
<evidence type="ECO:0000269" key="15">
    <source>
    </source>
</evidence>
<evidence type="ECO:0000269" key="16">
    <source>
    </source>
</evidence>
<evidence type="ECO:0000269" key="17">
    <source>
    </source>
</evidence>
<evidence type="ECO:0000269" key="18">
    <source>
    </source>
</evidence>
<evidence type="ECO:0000269" key="19">
    <source>
    </source>
</evidence>
<evidence type="ECO:0000269" key="20">
    <source>
    </source>
</evidence>
<evidence type="ECO:0000269" key="21">
    <source>
    </source>
</evidence>
<evidence type="ECO:0000269" key="22">
    <source>
    </source>
</evidence>
<evidence type="ECO:0000269" key="23">
    <source>
    </source>
</evidence>
<evidence type="ECO:0000269" key="24">
    <source>
    </source>
</evidence>
<evidence type="ECO:0000269" key="25">
    <source>
    </source>
</evidence>
<evidence type="ECO:0000269" key="26">
    <source>
    </source>
</evidence>
<evidence type="ECO:0000269" key="27">
    <source>
    </source>
</evidence>
<evidence type="ECO:0000269" key="28">
    <source>
    </source>
</evidence>
<evidence type="ECO:0000269" key="29">
    <source>
    </source>
</evidence>
<evidence type="ECO:0000269" key="30">
    <source>
    </source>
</evidence>
<evidence type="ECO:0000269" key="31">
    <source>
    </source>
</evidence>
<evidence type="ECO:0000269" key="32">
    <source>
    </source>
</evidence>
<evidence type="ECO:0000269" key="33">
    <source>
    </source>
</evidence>
<evidence type="ECO:0000269" key="34">
    <source>
    </source>
</evidence>
<evidence type="ECO:0000269" key="35">
    <source>
    </source>
</evidence>
<evidence type="ECO:0000269" key="36">
    <source>
    </source>
</evidence>
<evidence type="ECO:0000269" key="37">
    <source>
    </source>
</evidence>
<evidence type="ECO:0000269" key="38">
    <source>
    </source>
</evidence>
<evidence type="ECO:0000269" key="39">
    <source>
    </source>
</evidence>
<evidence type="ECO:0000269" key="40">
    <source>
    </source>
</evidence>
<evidence type="ECO:0000269" key="41">
    <source>
    </source>
</evidence>
<evidence type="ECO:0000269" key="42">
    <source>
    </source>
</evidence>
<evidence type="ECO:0000269" key="43">
    <source>
    </source>
</evidence>
<evidence type="ECO:0000269" key="44">
    <source>
    </source>
</evidence>
<evidence type="ECO:0000269" key="45">
    <source>
    </source>
</evidence>
<evidence type="ECO:0000269" key="46">
    <source>
    </source>
</evidence>
<evidence type="ECO:0000269" key="47">
    <source>
    </source>
</evidence>
<evidence type="ECO:0000269" key="48">
    <source>
    </source>
</evidence>
<evidence type="ECO:0000269" key="49">
    <source>
    </source>
</evidence>
<evidence type="ECO:0000269" key="50">
    <source>
    </source>
</evidence>
<evidence type="ECO:0000269" key="51">
    <source>
    </source>
</evidence>
<evidence type="ECO:0000269" key="52">
    <source>
    </source>
</evidence>
<evidence type="ECO:0000303" key="53">
    <source>
    </source>
</evidence>
<evidence type="ECO:0000303" key="54">
    <source>
    </source>
</evidence>
<evidence type="ECO:0000303" key="55">
    <source>
    </source>
</evidence>
<evidence type="ECO:0000305" key="56"/>
<evidence type="ECO:0000312" key="57">
    <source>
        <dbReference type="EMBL" id="AAB84390.1"/>
    </source>
</evidence>
<evidence type="ECO:0000312" key="58">
    <source>
        <dbReference type="EMBL" id="AAB84392.1"/>
    </source>
</evidence>
<evidence type="ECO:0000312" key="59">
    <source>
        <dbReference type="WormBase" id="R13H8.1a"/>
    </source>
</evidence>
<evidence type="ECO:0000312" key="60">
    <source>
        <dbReference type="WormBase" id="R13H8.1b"/>
    </source>
</evidence>
<evidence type="ECO:0000312" key="61">
    <source>
        <dbReference type="WormBase" id="R13H8.1c"/>
    </source>
</evidence>
<evidence type="ECO:0000312" key="62">
    <source>
        <dbReference type="WormBase" id="R13H8.1d"/>
    </source>
</evidence>
<evidence type="ECO:0000312" key="63">
    <source>
        <dbReference type="WormBase" id="R13H8.1e"/>
    </source>
</evidence>
<evidence type="ECO:0000312" key="64">
    <source>
        <dbReference type="WormBase" id="R13H8.1f"/>
    </source>
</evidence>
<evidence type="ECO:0000312" key="65">
    <source>
        <dbReference type="WormBase" id="R13H8.1h"/>
    </source>
</evidence>
<protein>
    <recommendedName>
        <fullName evidence="56">Forkhead box protein O</fullName>
        <shortName evidence="53">FOXO</shortName>
    </recommendedName>
    <alternativeName>
        <fullName evidence="65">Abnormal dauer formation protein 16</fullName>
    </alternativeName>
</protein>
<gene>
    <name evidence="65" type="primary">daf-16</name>
    <name evidence="65" type="ORF">R13H8.1</name>
</gene>
<feature type="chain" id="PRO_0000414886" description="Forkhead box protein O" evidence="56">
    <location>
        <begin position="1"/>
        <end position="541"/>
    </location>
</feature>
<feature type="DNA-binding region" description="Fork-head" evidence="1">
    <location>
        <begin position="175"/>
        <end position="268"/>
    </location>
</feature>
<feature type="region of interest" description="Disordered" evidence="2">
    <location>
        <begin position="118"/>
        <end position="168"/>
    </location>
</feature>
<feature type="region of interest" description="Disordered" evidence="2">
    <location>
        <begin position="252"/>
        <end position="291"/>
    </location>
</feature>
<feature type="compositionally biased region" description="Polar residues" evidence="2">
    <location>
        <begin position="118"/>
        <end position="150"/>
    </location>
</feature>
<feature type="modified residue" description="Phosphothreonine" evidence="29">
    <location>
        <position position="273"/>
    </location>
</feature>
<feature type="modified residue" description="Phosphoserine; by CaMK2" evidence="35">
    <location>
        <position position="319"/>
    </location>
</feature>
<feature type="splice variant" id="VSP_053105" description="In isoform e." evidence="56">
    <location>
        <begin position="1"/>
        <end position="238"/>
    </location>
</feature>
<feature type="splice variant" id="VSP_053106" description="In isoform a." evidence="54">
    <original>MQLEQKSSLHCSKCRNFLQKFSQDMQAWNCRELDSPLPSDITLHNLEPARPDSGMSFSTDFDDDFFNLDLHQQERSASFGGVTQYSQQFLREKCSFSPYFHTSLETVDSGRTSLYGSNEQCGQLGGASSNGSTAMLHTPDGSNSHQTSFPSDFRMSESPDDTVSGKKTTTRRNAWGNMSYAELITTAIMASPEKRLTLAQVYEWMVQNVPYFRDKGDSNSS</original>
    <variation>MNDSIDDDFPPEPRGRCYTWPMQQYIYQESSATIPHHHLNQHNNPYHPMHPHHQLPHMQQLPQPLLNLNMTTLTSSGSSVASSIGGGAQCSPCASGSSTAATNSSQQQQTVGQMLAASVPCSSSGMTLGMSLNLSQGGGPMPAKKKRCRKKPTDQLAQKKPNPWGEESYSDIIAKALESAPDGRLKLNEIYQWFSDNIPYFGERSSPEEA</variation>
    <location>
        <begin position="1"/>
        <end position="221"/>
    </location>
</feature>
<feature type="splice variant" id="VSP_053107" description="In isoform b and isoform c." evidence="54 55">
    <original>MQLEQKSSLHCSKCRNFLQKFSQDMQAWNCRELDSPLPSDITLHNLEPARPDSGMSFSTDFDDDFFNLDLHQQERSASFGGVTQYSQQFLREKCSFSPYFHTSLETVDSGRTS</original>
    <variation>MMEMLVDQGTDASSSASTSTSSVSRFGADTFMNTPDDVMMNDDMEPIPRDRCNTWPMRRPQLEPPLNSSPIIHEQIPEEDAD</variation>
    <location>
        <begin position="1"/>
        <end position="113"/>
    </location>
</feature>
<feature type="splice variant" id="VSP_053108" description="In isoform d." evidence="56">
    <location>
        <begin position="1"/>
        <end position="54"/>
    </location>
</feature>
<feature type="splice variant" id="VSP_042148" description="In isoform f." evidence="56">
    <location>
        <begin position="1"/>
        <end position="24"/>
    </location>
</feature>
<feature type="splice variant" id="VSP_053109" description="In isoform b." evidence="54">
    <original>DFR</original>
    <variation>E</variation>
    <location>
        <begin position="152"/>
        <end position="154"/>
    </location>
</feature>
<feature type="mutagenesis site" description="Decreases methylation by prmt-1; when associated with K-268 and K-270." evidence="29">
    <original>R</original>
    <variation>K</variation>
    <location>
        <position position="266"/>
    </location>
</feature>
<feature type="mutagenesis site" description="Decreases methylation by prmt-1; when associated with K-266 and K-270. Prevents phosphorylation by akt 1 and/or 2; when associated with K-270." evidence="29">
    <original>R</original>
    <variation>K</variation>
    <location>
        <position position="268"/>
    </location>
</feature>
<feature type="mutagenesis site" description="Decreases methylation by prmt-1; when associated with K-266 and K-268. Prevents phosphorylation by akt 1 and/or 2; when associated with K-268." evidence="29">
    <original>R</original>
    <variation>K</variation>
    <location>
        <position position="270"/>
    </location>
</feature>
<feature type="mutagenesis site" description="Prevents phosphorylation and results in strong nuclear localization. Reduces phosphorylation; when associated with A-273." evidence="4 29">
    <original>S</original>
    <variation>A</variation>
    <location>
        <position position="271"/>
    </location>
</feature>
<feature type="mutagenesis site" description="Prevents phosphorylation and results in strong nuclear localization. Reduces phosphorylation in normal and starved conditions. Reduces phosphorylation; when associated with A-271." evidence="4 29">
    <original>T</original>
    <variation>A</variation>
    <location>
        <position position="273"/>
    </location>
</feature>
<feature type="mutagenesis site" description="Prevents phosphorylation and results in cytoplasmic localization in unc-43 n498 gain-of-function or tax-6 mutant backgrounds." evidence="35">
    <original>S</original>
    <variation>A</variation>
    <location>
        <position position="319"/>
    </location>
</feature>
<feature type="mutagenesis site" description="Phosphomimetic mutant which causes constitutive nuclear localization." evidence="35">
    <original>S</original>
    <variation>D</variation>
    <location>
        <position position="319"/>
    </location>
</feature>
<feature type="mutagenesis site" description="Prevents phosphorylation and results in strong nuclear localization." evidence="4">
    <original>S</original>
    <variation>A</variation>
    <location>
        <position position="345"/>
    </location>
</feature>
<feature type="mutagenesis site" description="In m27; defective dauer phase entry, but animals are capable of entering a partial dauer state with some dauer morphological characteristics. Reduces dex-1 expression in seam cells during the dauer phase." evidence="47">
    <location>
        <begin position="373"/>
        <end position="541"/>
    </location>
</feature>
<comment type="function">
    <text evidence="3 4 5 6 7 8 11 12 15 16 17 18 19 20 21 22 23 25 26 28 29 30 31 32 34 36 37 39 40 41 42 43 45 46 47 48 49 50 52">Forkhead-type transcription factor (PubMed:9360933). Binds to the promoters of genes that contain the daf-16/FOXO binding element (DBE), TTGTTTAC, in their regulatory region (PubMed:10880363, PubMed:23770237, PubMed:26675724). Functions in the Insulin/IGF-1-like signaling (IIS) mediated pathway which affects lipogenesis, lifespan, starvation survival, heat shock and oxidative stress responses, sleep, associative memory, and dauer formation (PubMed:11381260, PubMed:11747821, PubMed:11747825, PubMed:12750521, PubMed:14622602, PubMed:17900900, PubMed:18358814, PubMed:18762027, PubMed:18832074, PubMed:19103192, PubMed:21531333, PubMed:22081913, PubMed:26675724, PubMed:29523076, PubMed:8247153, PubMed:9360933). Longevity signaling predominantly arises from expression in the intestine (PubMed:14622602). Acts in the intestine to mediate the role of slo-1 in age-associated decline in motor activity and longevity (PubMed:30613772). Transcriptional activity of daf-16/FOXO is negatively regulated by interaction with host cell factor homolog hcf-1; and by cytoplasmic sequestration by association with ftt-2 (PubMed:11381260, PubMed:18828672, PubMed:21531333). Inhibition is required for the carbon dioxide (CO2) avoidance response (PubMed:18524954). Upon loss of inhibition, daf-16 translocates to the nucleus to regulate genes that result in delayed reproduction and growth while increasing stress resistance starvation tolerance and longevity (PubMed:11747825, PubMed:21531333). Association with arginine methyltransferase prmt-1 prevents phosphorylation and allows for translocation to the nucleus and the subsequent transcription of longevity-related genes (PubMed:21531333). Modulation of its activity by cGMP levels in sensory neurons regulates lifespan (PubMed:19489741). Has a protective role against muscle dystrophy (PubMed:18397876). Involved in mediating protection against aberrant protein aggregation proteotoxicity (PubMed:16902091). Influences transcription of genes that code for proteins involved in immunity as part of a general stress response (PubMed:17096597, PubMed:18245330). Targets genes that inhibit and stimulate tumor growth (PubMed:17934462). Targets kinases, phosphatases and transcription factors that are primarily involved in signaling and gene regulation (PubMed:24516399). Thought to regulate ins-7 in FOXO-to-FOXO signaling, which coordinates daf-16 expression (PubMed:18025456). Activity is positively regulated by shc-1-mediated inhibition of daf-2 and activation of JNK pathway (PubMed:18832074, PubMed:22916022). Through the regulation of its activity by shc-1-mediated inhibition of daf-2 and activation of JNK pathway, plays a role in maintaining the integrity of the gonad (PubMed:22916022). Functions by indirect interaction with jnk-1 of the mitogen-activated protein kinase (MAPK) pathway (PubMed:17894411). Involved in increased proteasome activity by activating expression of rpn-6.1 in response to proteotoxic stress, leading to enhanced assembly of the 26S proteasome, followed by higher proteasome activity (PubMed:22922647). Also regulates proteasome activity in the intestine by preventing expression of deubiquitinase ubh-4 (PubMed:23770237). Represses transcription of natc-1 (PubMed:25330323). Involved in regulation of srh-234 expression (PubMed:25357003). Binds to the promoter of the AMPK-gamma regulatory subunit, aakg-4, and activates its transcription (PubMed:24516399). Also activates transcription of AMPK-gamma regulatory subunit, aakg-1 (PubMed:24516399). Maintains endoplasmic reticulum (ER) function by inducing protein degradation and elimination to remove misfolded secretory proteins from the ER independently of the ire-1/xbp-1 unfolded protein response pathway (PubMed:25448701). Regulates epidermal innate immunity to nematophagous fungal infection and physical wounding which trigger bli-3 induced ROS release, leading to daf-16 activation independently of daf-2 signaling (PubMed:24146615). May negatively regulate resistance to stress caused by oxidized cholesterol adducts by preventing the activation of daf-9 and nuclear hormone receptor daf-12, two members of the steroid signaling pathway (PubMed:24957743). Promotes apoptosis during embryonic development (PubMed:25383666). Probably through the regulation of the autophagy genes atg-18 and atg-16.2, plays a role in regulating stem cell number in the germline during larval development (PubMed:28285998). Plays a role in learning and memory; including associative memory, and aversive gustatory associated learning known as salt avoidance learning (PubMed:26675724, PubMed:30779740). Plays a role in regulating gene transcription in response to white light exposure (PubMed:29500338). Binds to the promoter of dex-1 to positively regulate its expression in seam cells during the dauer phase (PubMed:30409788). Plays a role in transgenerational lipid accumulation in response to a high-fat diet (PubMed:35140229).</text>
</comment>
<comment type="function">
    <molecule>Isoform a</molecule>
    <text evidence="38">Functions in the Insulin/IGF-1-like signaling (IIS) mediated pathway (PubMed:24834345). May play a role in lifespan modulation, but less significant than that played by isoforms d and f (PubMed:24834345).</text>
</comment>
<comment type="function">
    <molecule>Isoform d</molecule>
    <text evidence="38">Functions in the Insulin/IGF-1-like signaling (IIS) mediated pathway (PubMed:24834345). Transcript level in the early adult may play a role in lifespan modulation, but effect is more significant than that played by isoform a (PubMed:24834345).</text>
</comment>
<comment type="function">
    <molecule>Isoform f</molecule>
    <text evidence="38">Functions in the Insulin/IGF-1-like signaling (IIS) mediated pathway (PubMed:24834345). Transcript level in the early adult may play a role in lifespan modulation, but effect is more significant than that played by isoform a (PubMed:24834345).</text>
</comment>
<comment type="subunit">
    <text evidence="9 13 24 29 35">Interacts with rle-1 (PubMed:17276341). Interacts with unc-43 and tax-6 (PubMed:23805378). Interacts with jnk-1 (PubMed:15767565). Interacts with ftt-2 (PubMed:16777605, PubMed:21531333). Interacts with prmt-1 (PubMed:21531333). Interacts with hcf-1.</text>
</comment>
<comment type="interaction">
    <interactant intactId="EBI-324028">
        <id>O16850</id>
    </interactant>
    <interactant intactId="EBI-1770718">
        <id>Q17941</id>
        <label>akt-1</label>
    </interactant>
    <organismsDiffer>false</organismsDiffer>
    <experiments>3</experiments>
</comment>
<comment type="interaction">
    <interactant intactId="EBI-324028">
        <id>O16850</id>
    </interactant>
    <interactant intactId="EBI-320656">
        <id>Q9XTG7</id>
        <label>akt-2</label>
    </interactant>
    <organismsDiffer>false</organismsDiffer>
    <experiments>3</experiments>
</comment>
<comment type="interaction">
    <interactant intactId="EBI-324028">
        <id>O16850</id>
    </interactant>
    <interactant intactId="EBI-1770776">
        <id>Q2PJ68</id>
        <label>sgk-1</label>
    </interactant>
    <organismsDiffer>false</organismsDiffer>
    <experiments>3</experiments>
</comment>
<comment type="interaction">
    <interactant intactId="EBI-324028">
        <id>O16850</id>
    </interactant>
    <interactant intactId="EBI-966082">
        <id>Q21921</id>
        <label>sir-2.1</label>
    </interactant>
    <organismsDiffer>false</organismsDiffer>
    <experiments>2</experiments>
</comment>
<comment type="subcellular location">
    <subcellularLocation>
        <location evidence="4 6 9 10 14 15 25 27 29 31 35 36">Nucleus</location>
    </subcellularLocation>
    <subcellularLocation>
        <location evidence="4 6 9 10 14 15 25 27 29 31 35 36">Cytoplasm</location>
    </subcellularLocation>
    <text evidence="4 6 9 10 14 15 25 27 29 36">Shuttles between cytoplasm and nucleus (PubMed:11381260, PubMed:17894411). Nuclear translocation is inhibited by phosphorylation by AKT proteins (PubMed:11381260, PubMed:11747825, PubMed:21531333). Association with ftt-2 sequesters daf-16 in the cytoplasm (PubMed:21531333). Association with prmt-1 allows for translocation to the nucleus (PubMed:21531333). Nuclear translocation is promoted by phosphorylation by unc-43 and inhibited by dephosphorylation by tax-6 (PubMed:23805378). Nuclear translocation is promoted by jnk-1 upon heat stress and by sek-1 upon oxidative stress (PubMed:15767565, PubMed:15888317). Nucleocytoplasmic shuttling is induced by starvation, heat treatment, hypergravity, reactive oxygen species (generated by juglone), exposure to tributyltin or 4-hydroxy-E-globularinin (4-HEG) and the flavonoids kaempferol and fisetin (PubMed:11381260, PubMed:17551714, PubMed:18832074, PubMed:19252938, PubMed:21531333, PubMed:23805378). Nuclear localization induced by nematophagous fungal infection (PubMed:24146615).</text>
</comment>
<comment type="subcellular location">
    <molecule>Isoform a</molecule>
    <subcellularLocation>
        <location evidence="38">Nucleus</location>
    </subcellularLocation>
    <subcellularLocation>
        <location evidence="38">Cytoplasm</location>
    </subcellularLocation>
    <text evidence="38">Ratio of nuclear to cytoplasmic localization is daf-2-dependent.</text>
</comment>
<comment type="subcellular location">
    <molecule>Isoform d</molecule>
    <subcellularLocation>
        <location evidence="38">Nucleus</location>
    </subcellularLocation>
    <subcellularLocation>
        <location evidence="38">Cytoplasm</location>
    </subcellularLocation>
    <text evidence="38">Ratio of nuclear to cytoplasmic localization is daf-2-dependent.</text>
</comment>
<comment type="subcellular location">
    <molecule>Isoform f</molecule>
    <subcellularLocation>
        <location evidence="38">Nucleus</location>
    </subcellularLocation>
    <subcellularLocation>
        <location evidence="38">Cytoplasm</location>
    </subcellularLocation>
    <text evidence="38">Ratio of nuclear to cytoplasmic localization is daf-2-dependent.</text>
</comment>
<comment type="alternative products">
    <event type="alternative splicing"/>
    <isoform>
        <id>O16850-8</id>
        <name evidence="65">h</name>
        <sequence type="displayed"/>
    </isoform>
    <isoform>
        <id>O16850-2</id>
        <name evidence="59">a</name>
        <name evidence="54">b</name>
        <sequence type="described" ref="VSP_053106"/>
    </isoform>
    <isoform>
        <id>O16850-4</id>
        <name evidence="60">b</name>
        <name evidence="54">a2</name>
        <sequence type="described" ref="VSP_053107 VSP_053109"/>
    </isoform>
    <isoform>
        <id>O16850-3</id>
        <name evidence="61">c</name>
        <name evidence="54">a1</name>
        <sequence type="described" ref="VSP_053107"/>
    </isoform>
    <isoform>
        <id>O16850-5</id>
        <name evidence="62">d</name>
        <sequence type="described" ref="VSP_053108"/>
    </isoform>
    <isoform>
        <id>O16850-6</id>
        <name evidence="63">e</name>
        <sequence type="described" ref="VSP_053105"/>
    </isoform>
    <isoform>
        <id>O16850-1</id>
        <name evidence="64">f</name>
        <sequence type="described" ref="VSP_042148"/>
    </isoform>
</comment>
<comment type="tissue specificity">
    <text evidence="5 6 8 15 51">Isoform b and isoform c are expressed in ectoderm, muscles, intestine and neurons (PubMed:11747825, PubMed:14622602, PubMed:17894411, PubMed:9353126). Isoform b is also expressed in the pharynx (PubMed:11747821). The intestine appears to be the primary site of longevity function (PubMed:14622602).</text>
</comment>
<comment type="developmental stage">
    <text evidence="51">Expressed in embryos, larvae, dauer larvae and adults.</text>
</comment>
<comment type="developmental stage">
    <molecule>Isoform a</molecule>
    <text evidence="38">Expression throughout the body increases slightly with age.</text>
</comment>
<comment type="developmental stage">
    <molecule>Isoform d</molecule>
    <text evidence="38">Expression increases substantially with age.</text>
</comment>
<comment type="developmental stage">
    <molecule>Isoform f</molecule>
    <text evidence="38">Expression increases substantially with age.</text>
</comment>
<comment type="induction">
    <text evidence="33">Induced by quinic acid.</text>
</comment>
<comment type="PTM">
    <text evidence="9 20 29 35">Phosphorylated by akt-1 and/or akt-2 (PubMed:18358814, PubMed:21531333). Phosphorylated by sgk-1 (PubMed:18358814). Phosphorylated by unc-43 (PubMed:23805378). Phosphorylated by jnk-1 (PubMed:15767565). Dephosphorylated by tax-6 in vitro (PubMed:23805378).</text>
</comment>
<comment type="PTM">
    <text evidence="13">Ubiquitinated. Ubiquitination by rle-1 leads to proteasome-mediated degradation.</text>
</comment>
<comment type="PTM">
    <text evidence="29">Methylation by prmt-1 prevents phosphorylation and promotes translocation to the nucleus to allow for daf-16-dependent transcription.</text>
</comment>
<comment type="disruption phenotype">
    <text evidence="16 18 34 35 36 39 41 42 44 48 49 52">Dauer defective phenotype in larvae and a reduced stress phenotype in adults (PubMed:9360933). Increased carbonyl accumulation and increased sensitivity to starvation (PubMed:18025456). Increased expression of the srh-234 chemoreceptor during starvation (PubMed:25357003). Increased sensitivity to physical injury and more susceptible to death by nematophagous fungal infection (PubMed:24146615). Reduces life span and motor activity throughout life (PubMed:23805378, PubMed:30613772). Suppresses the life-span extension and higher motor activity in aged slo-1 background mutant (PubMed:30613772). Causes a delay in apoptosis during embryonic development (PubMed:25383666). Defective gustatory associative learning in response to salt cues (PubMed:30779740). RNAi-mediated knock-down reduces expression of daf-16 target genes and genes up-regulated in response to nematophagous fungal infection such as sod-3 (PubMed:24146615). RNAi-mediated knockdown causes reduced ability of dietary restriction to extend lifespan (PubMed:17900900). Simultaneous RNAi-mediated knockdown of metalloproteinase zmp-2 restores normal survival upon heat stress and prevents increased susceptibility to heat stress in a daf-9 or daf-12 mutant background (PubMed:24957743). RNAi-mediated knockdown in a daf-2 (e1370) mutant background restores expression of deubiquitinase ubh-4 in the intestine (PubMed:23770237). RNAi-mediated knockdown suppresses the decreased number of mitotic nuclei in the germline of developing larvae in an atg-18 (gk378) or atg-16.2 (ok3224) mutant background. Suppresses associative memory, axon regeneration and fkh-9 transcript levels, in a daf-2 mutant background. RNAi-mediated knockdown in the first generation offspring (F1) of adults fed a high-fat diet prevents lipid accumulation (PubMed:35140229).</text>
</comment>
<reference evidence="56 57" key="1">
    <citation type="journal article" date="1997" name="Nature">
        <title>The Fork head transcription factor DAF-16 transduces insulin-like metabolic and longevity signals in C. elegans.</title>
        <authorList>
            <person name="Ogg S."/>
            <person name="Paradis S."/>
            <person name="Gottlieb S."/>
            <person name="Patterson G.I."/>
            <person name="Lee L."/>
            <person name="Tissenbaum H.A."/>
            <person name="Ruvkun G."/>
        </authorList>
    </citation>
    <scope>NUCLEOTIDE SEQUENCE [MRNA] (ISOFORMS A; B AND C)</scope>
    <scope>TISSUE SPECIFICITY</scope>
    <scope>DEVELOPMENTAL STAGE</scope>
    <source>
        <strain evidence="58">Bristol N2</strain>
    </source>
</reference>
<reference evidence="56" key="2">
    <citation type="journal article" date="1997" name="Science">
        <title>daf-16: An HNF-3/forkhead family member that can function to double the life-span of Caenorhabditis elegans.</title>
        <authorList>
            <person name="Lin K."/>
            <person name="Dorman J.B."/>
            <person name="Rodan A."/>
            <person name="Kenyon C."/>
        </authorList>
    </citation>
    <scope>NUCLEOTIDE SEQUENCE [MRNA] (ISOFORM C)</scope>
    <scope>FUNCTION</scope>
    <scope>DISRUPTION PHENOTYPE</scope>
    <source>
        <strain>Bristol N2</strain>
    </source>
</reference>
<reference evidence="56" key="3">
    <citation type="journal article" date="1998" name="Science">
        <title>Genome sequence of the nematode C. elegans: a platform for investigating biology.</title>
        <authorList>
            <consortium name="The C. elegans sequencing consortium"/>
        </authorList>
    </citation>
    <scope>NUCLEOTIDE SEQUENCE [LARGE SCALE GENOMIC DNA]</scope>
    <source>
        <strain>Bristol N2</strain>
    </source>
</reference>
<reference key="4">
    <citation type="journal article" date="1993" name="Nature">
        <title>A C. elegans mutant that lives twice as long as wild type.</title>
        <authorList>
            <person name="Kenyon C."/>
            <person name="Chang J."/>
            <person name="Gensch E."/>
            <person name="Rudner A."/>
            <person name="Tabtiang R."/>
        </authorList>
    </citation>
    <scope>FUNCTION</scope>
</reference>
<reference evidence="56" key="5">
    <citation type="journal article" date="2000" name="Biochem. J.">
        <title>Identification of the differential distribution patterns of mRNAs and consensus binding sequences for mouse DAF-16 homologues.</title>
        <authorList>
            <person name="Furuyama T."/>
            <person name="Nakazawa T."/>
            <person name="Nakano I."/>
            <person name="Mori N."/>
        </authorList>
    </citation>
    <scope>FUNCTION</scope>
</reference>
<reference evidence="56" key="6">
    <citation type="journal article" date="2001" name="Curr. Biol.">
        <title>Regulation of C. elegans DAF-16 and its human ortholog FKHRL1 by the daf-2 insulin-like signaling pathway.</title>
        <authorList>
            <person name="Lee R.Y."/>
            <person name="Hench J."/>
            <person name="Ruvkun G."/>
        </authorList>
    </citation>
    <scope>FUNCTION</scope>
    <scope>TISSUE SPECIFICITY</scope>
</reference>
<reference evidence="56" key="7">
    <citation type="journal article" date="2001" name="Curr. Biol.">
        <title>daf-16 integrates developmental and environmental inputs to mediate aging in the nematode Caenorhabditis elegans.</title>
        <authorList>
            <person name="Henderson S.T."/>
            <person name="Johnson T.E."/>
        </authorList>
    </citation>
    <scope>FUNCTION</scope>
    <scope>SUBCELLULAR LOCATION</scope>
    <scope>TISSUE SPECIFICITY</scope>
</reference>
<reference evidence="56" key="8">
    <citation type="journal article" date="2001" name="Nat. Genet.">
        <title>Regulation of the Caenorhabditis elegans longevity protein DAF-16 by insulin/IGF-1 and germline signaling.</title>
        <authorList>
            <person name="Lin K."/>
            <person name="Hsin H."/>
            <person name="Libina N."/>
            <person name="Kenyon C."/>
        </authorList>
    </citation>
    <scope>FUNCTION</scope>
    <scope>SUBCELLULAR LOCATION</scope>
    <scope>MUTAGENESIS OF SER-271; THR-273 AND SER-345</scope>
</reference>
<reference key="9">
    <citation type="journal article" date="2003" name="Cell">
        <title>Tissue-specific activities of C. elegans DAF-16 in the regulation of lifespan.</title>
        <authorList>
            <person name="Libina N."/>
            <person name="Berman J.R."/>
            <person name="Kenyon C."/>
        </authorList>
    </citation>
    <scope>FUNCTION</scope>
    <scope>TISSUE SPECIFICITY</scope>
</reference>
<reference evidence="56" key="10">
    <citation type="journal article" date="2003" name="Science">
        <title>Regulation of aging and age-related disease by DAF-16 and heat-shock factor.</title>
        <authorList>
            <person name="Hsu A.L."/>
            <person name="Murphy C.T."/>
            <person name="Kenyon C."/>
        </authorList>
    </citation>
    <scope>FUNCTION</scope>
</reference>
<reference key="11">
    <citation type="journal article" date="2005" name="Mech. Ageing Dev.">
        <title>The p38 signal transduction pathway participates in the oxidative stress-mediated translocation of DAF-16 to Caenorhabditis elegans nuclei.</title>
        <authorList>
            <person name="Kondo M."/>
            <person name="Yanase S."/>
            <person name="Ishii T."/>
            <person name="Hartman P.S."/>
            <person name="Matsumoto K."/>
            <person name="Ishii N."/>
        </authorList>
    </citation>
    <scope>SUBCELLULAR LOCATION</scope>
</reference>
<reference key="12">
    <citation type="journal article" date="2005" name="Proc. Natl. Acad. Sci. U.S.A.">
        <title>JNK regulates lifespan in Caenorhabditis elegans by modulating nuclear translocation of forkhead transcription factor/DAF-16.</title>
        <authorList>
            <person name="Oh S.W."/>
            <person name="Mukhopadhyay A."/>
            <person name="Svrzikapa N."/>
            <person name="Jiang F."/>
            <person name="Davis R.J."/>
            <person name="Tissenbaum H.A."/>
        </authorList>
    </citation>
    <scope>INTERACTION WITH JNK-1</scope>
    <scope>SUBCELLULAR LOCATION</scope>
    <scope>PHOSPHORYLATION</scope>
</reference>
<reference key="13">
    <citation type="journal article" date="2006" name="Cell">
        <title>C. elegans SIR-2.1 interacts with 14-3-3 proteins to activate DAF-16 and extend life span.</title>
        <authorList>
            <person name="Berdichevsky A."/>
            <person name="Viswanathan M."/>
            <person name="Horvitz H.R."/>
            <person name="Guarente L."/>
        </authorList>
    </citation>
    <scope>INTERACTION WITH FTT-2</scope>
</reference>
<reference key="14">
    <citation type="journal article" date="2006" name="PLoS Genet.">
        <title>p38 MAPK regulates expression of immune response genes and contributes to longevity in C. elegans.</title>
        <authorList>
            <person name="Troemel E.R."/>
            <person name="Chu S.W."/>
            <person name="Reinke V."/>
            <person name="Lee S.S."/>
            <person name="Ausubel F.M."/>
            <person name="Kim D.H."/>
        </authorList>
    </citation>
    <scope>FUNCTION</scope>
</reference>
<reference key="15">
    <citation type="journal article" date="2006" name="Science">
        <title>Opposing activities protect against age-onset proteotoxicity.</title>
        <authorList>
            <person name="Cohen E."/>
            <person name="Bieschke J."/>
            <person name="Perciavalle R.M."/>
            <person name="Kelly J.W."/>
            <person name="Dillin A."/>
        </authorList>
    </citation>
    <scope>FUNCTION</scope>
</reference>
<reference key="16">
    <citation type="journal article" date="2007" name="Arch. Toxicol.">
        <title>Effects of the flavonoids kaempferol and fisetin on thermotolerance, oxidative stress and FoxO transcription factor DAF-16 in the model organism Caenorhabditis elegans.</title>
        <authorList>
            <person name="Kampkotter A."/>
            <person name="Gombitang Nkwonkam C."/>
            <person name="Zurawski R.F."/>
            <person name="Timpel C."/>
            <person name="Chovolou Y."/>
            <person name="Watjen W."/>
            <person name="Kahl R."/>
        </authorList>
    </citation>
    <scope>SUBCELLULAR LOCATION</scope>
</reference>
<reference key="17">
    <citation type="journal article" date="2007" name="Curr. Biol.">
        <title>An AMPK-FOXO pathway mediates longevity induced by a novel method of dietary restriction in C. elegans.</title>
        <authorList>
            <person name="Greer E.L."/>
            <person name="Dowlatshahi D."/>
            <person name="Banko M.R."/>
            <person name="Villen J."/>
            <person name="Hoang K."/>
            <person name="Blanchard D."/>
            <person name="Gygi S.P."/>
            <person name="Brunet A."/>
        </authorList>
    </citation>
    <scope>FUNCTION</scope>
    <scope>DISRUPTION PHENOTYPE</scope>
</reference>
<reference key="18">
    <citation type="journal article" date="2007" name="Dev. Cell">
        <title>RLE-1, an E3 ubiquitin ligase, regulates C. elegans aging by catalyzing DAF-16 polyubiquitination.</title>
        <authorList>
            <person name="Li W."/>
            <person name="Gao B."/>
            <person name="Lee S.-M."/>
            <person name="Bennett K."/>
            <person name="Fang D."/>
        </authorList>
    </citation>
    <scope>INTERACTION WITH RLE-1</scope>
    <scope>UBIQUITINATION</scope>
</reference>
<reference key="19">
    <citation type="journal article" date="2007" name="Nat. Genet.">
        <title>DAF-16/FOXO targets genes that regulate tumor growth in Caenorhabditis elegans.</title>
        <authorList>
            <person name="Pinkston-Gosse J."/>
            <person name="Kenyon C."/>
        </authorList>
    </citation>
    <scope>FUNCTION</scope>
</reference>
<reference key="20">
    <citation type="journal article" date="2007" name="Proc. Natl. Acad. Sci. U.S.A.">
        <title>Tissue entrainment by feedback regulation of insulin gene expression in the endoderm of Caenorhabditis elegans.</title>
        <authorList>
            <person name="Murphy C.T."/>
            <person name="Lee S.J."/>
            <person name="Kenyon C."/>
        </authorList>
    </citation>
    <scope>FUNCTION</scope>
    <scope>DISRUPTION PHENOTYPE</scope>
</reference>
<reference key="21">
    <citation type="journal article" date="2008" name="Cell">
        <title>Direct inhibition of the longevity-promoting factor SKN-1 by insulin-like signaling in C. elegans.</title>
        <authorList>
            <person name="Tullet J.M."/>
            <person name="Hertweck M."/>
            <person name="An J.H."/>
            <person name="Baker J."/>
            <person name="Hwang J.Y."/>
            <person name="Liu S."/>
            <person name="Oliveira R.P."/>
            <person name="Baumeister R."/>
            <person name="Blackwell T.K."/>
        </authorList>
    </citation>
    <scope>FUNCTION</scope>
    <scope>PHOSPHORYLATION BY AKT-1; AKT-2 AND SGK-1</scope>
</reference>
<reference key="22">
    <citation type="journal article" date="2008" name="Cell Metab.">
        <title>A 13C isotope labeling strategy reveals the influence of insulin signaling on lipogenesis in C. elegans.</title>
        <authorList>
            <person name="Perez C.L."/>
            <person name="Van Gilst M.R."/>
        </authorList>
    </citation>
    <scope>FUNCTION</scope>
</reference>
<reference key="23">
    <citation type="journal article" date="2008" name="Genes Dev.">
        <title>SHC-1/p52Shc targets the insulin/IGF-1 and JNK signaling pathways to modulate life span and stress response in C. elegans.</title>
        <authorList>
            <person name="Neumann-Haefelin E."/>
            <person name="Qi W."/>
            <person name="Finkbeiner E."/>
            <person name="Walz G."/>
            <person name="Baumeister R."/>
            <person name="Hertweck M."/>
        </authorList>
    </citation>
    <scope>FUNCTION</scope>
    <scope>SUBCELLULAR LOCATION</scope>
</reference>
<reference key="24">
    <citation type="journal article" date="2008" name="Genetics">
        <title>DAF-16-dependent suppression of immunity during reproduction in Caenorhabditis elegans.</title>
        <authorList>
            <person name="Miyata S."/>
            <person name="Begun J."/>
            <person name="Troemel E.R."/>
            <person name="Ausubel F.M."/>
        </authorList>
    </citation>
    <scope>FUNCTION</scope>
</reference>
<reference key="25">
    <citation type="journal article" date="2008" name="Hum. Mol. Genet.">
        <title>Sirtuin inhibition protects from the polyalanine muscular dystrophy protein PABPN1.</title>
        <authorList>
            <person name="Catoire H."/>
            <person name="Pasco M.Y."/>
            <person name="Abu-Baker A."/>
            <person name="Holbert S."/>
            <person name="Tourette C."/>
            <person name="Brais B."/>
            <person name="Rouleau G.A."/>
            <person name="Parker J.A."/>
            <person name="Neri C."/>
        </authorList>
    </citation>
    <scope>FUNCTION</scope>
</reference>
<reference key="26">
    <citation type="journal article" date="2008" name="J. Cell. Physiol.">
        <title>The MAP kinase JNK-1 of Caenorhabditis elegans: location, activation, and influences over temperature-dependent insulin-like signaling, stress responses, and fitness.</title>
        <authorList>
            <person name="Wolf M."/>
            <person name="Nunes F."/>
            <person name="Henkel A."/>
            <person name="Heinick A."/>
            <person name="Paul R.J."/>
        </authorList>
    </citation>
    <scope>FUNCTION</scope>
    <scope>SUBCELLULAR LOCATION</scope>
    <scope>TISSUE SPECIFICITY</scope>
</reference>
<reference evidence="56" key="27">
    <citation type="journal article" date="2008" name="PLoS Biol.">
        <title>Caenorhabditis elegans HCF-1 functions in longevity maintenance as a DAF-16 regulator.</title>
        <authorList>
            <person name="Li J."/>
            <person name="Ebata A."/>
            <person name="Dong Y."/>
            <person name="Rizki G."/>
            <person name="Iwata T."/>
            <person name="Lee S.S."/>
        </authorList>
    </citation>
    <scope>FUNCTION</scope>
    <scope>INTERACTION WITH HCF-1</scope>
</reference>
<reference key="28">
    <citation type="journal article" date="2008" name="Proc. Natl. Acad. Sci. U.S.A.">
        <title>A carbon dioxide avoidance behavior is integrated with responses to ambient oxygen and food in Caenorhabditis elegans.</title>
        <authorList>
            <person name="Bretscher A.J."/>
            <person name="Busch K.E."/>
            <person name="de Bono M."/>
        </authorList>
    </citation>
    <scope>FUNCTION</scope>
</reference>
<reference key="29">
    <citation type="journal article" date="2009" name="Aging Cell">
        <title>Endogenous cGMP regulates adult longevity via the insulin signaling pathway in Caenorhabditis elegans.</title>
        <authorList>
            <person name="Hahm J.H."/>
            <person name="Kim S."/>
            <person name="Paik Y.K."/>
        </authorList>
    </citation>
    <scope>FUNCTION</scope>
</reference>
<reference key="30">
    <citation type="journal article" date="2009" name="Dev. Biol.">
        <title>Combined informatic and expression screen identifies the novel DAF-16 target HLH-13.</title>
        <authorList>
            <person name="Liachko N."/>
            <person name="Davidowitz R."/>
            <person name="Lee S.S."/>
        </authorList>
    </citation>
    <scope>FUNCTION</scope>
</reference>
<reference key="31">
    <citation type="journal article" date="2009" name="Genes Nutr.">
        <title>Feeding a ROS-generator to Caenorhabditis elegans leads to increased expression of small heat shock protein HSP-16.2 and hormesis.</title>
        <authorList>
            <person name="Hartwig K."/>
            <person name="Heidler T."/>
            <person name="Moch J."/>
            <person name="Daniel H."/>
            <person name="Wenzel U."/>
        </authorList>
    </citation>
    <scope>SUBCELLULAR LOCATION</scope>
</reference>
<reference key="32">
    <citation type="journal article" date="2011" name="Cell Metab.">
        <title>Asymmetric arginine dimethylation determines life span in C. elegans by regulating forkhead transcription factor DAF-16.</title>
        <authorList>
            <person name="Takahashi Y."/>
            <person name="Daitoku H."/>
            <person name="Hirota K."/>
            <person name="Tamiya H."/>
            <person name="Yokoyama A."/>
            <person name="Kako K."/>
            <person name="Nagashima Y."/>
            <person name="Nakamura A."/>
            <person name="Shimada T."/>
            <person name="Watanabe S."/>
            <person name="Yamagata K."/>
            <person name="Yasuda K."/>
            <person name="Ishii N."/>
            <person name="Fukamizu A."/>
        </authorList>
    </citation>
    <scope>FUNCTION</scope>
    <scope>INTERACTION WITH FTT-2 AND PRMT-1</scope>
    <scope>SUBCELLULAR LOCATION</scope>
    <scope>PHOSPHORYLATION BY AKT</scope>
    <scope>PHOSPHORYLATION AT THR-273</scope>
    <scope>MUTAGENESIS OF ARG-266; ARG-268; ARG-270; SER-271 AND THR-273</scope>
</reference>
<reference key="33">
    <citation type="journal article" date="2012" name="Aging Cell">
        <title>New genes that extend Caenorhabditis elegans' lifespan in response to reproductive signals.</title>
        <authorList>
            <person name="McCormick M."/>
            <person name="Chen K."/>
            <person name="Ramaswamy P."/>
            <person name="Kenyon C."/>
        </authorList>
    </citation>
    <scope>FUNCTION</scope>
</reference>
<reference key="34">
    <citation type="journal article" date="2012" name="Bull. Environ. Contam. Toxicol.">
        <title>Stress-response protein expression and DAF-16 translocation were induced in tributyltin-exposed Caenorhabditis elegans.</title>
        <authorList>
            <person name="Wang Y."/>
            <person name="Jian F."/>
            <person name="Wu J."/>
            <person name="Wang S."/>
        </authorList>
    </citation>
    <scope>SUBCELLULAR LOCATION</scope>
</reference>
<reference key="35">
    <citation type="journal article" date="2012" name="Free Radic. Biol. Med.">
        <title>Longevity-promoting effects of 4-hydroxy-E-globularinin in Caenorhabditis elegans.</title>
        <authorList>
            <person name="Shukla V."/>
            <person name="Yadav D."/>
            <person name="Phulara S.C."/>
            <person name="Gupta M.M."/>
            <person name="Saikia S.K."/>
            <person name="Pandey R."/>
        </authorList>
    </citation>
    <scope>SUBCELLULAR LOCATION</scope>
</reference>
<reference key="36">
    <citation type="journal article" date="2012" name="Nature">
        <title>RPN-6 determines C. elegans longevity under proteotoxic stress conditions.</title>
        <authorList>
            <person name="Vilchez D."/>
            <person name="Morantte I."/>
            <person name="Liu Z."/>
            <person name="Douglas P.M."/>
            <person name="Merkwirth C."/>
            <person name="Rodrigues A.P."/>
            <person name="Manning G."/>
            <person name="Dillin A."/>
        </authorList>
    </citation>
    <scope>FUNCTION</scope>
    <scope>SUBCELLULAR LOCATION</scope>
</reference>
<reference key="37">
    <citation type="journal article" date="2012" name="PLoS Genet.">
        <title>Cell-nonautonomous signaling of FOXO/DAF-16 to the stem cells of Caenorhabditis elegans.</title>
        <authorList>
            <person name="Qi W."/>
            <person name="Huang X."/>
            <person name="Neumann-Haefelin E."/>
            <person name="Schulze E."/>
            <person name="Baumeister R."/>
        </authorList>
    </citation>
    <scope>FUNCTION</scope>
    <scope>SUBCELLULAR LOCATION</scope>
</reference>
<reference key="38">
    <citation type="journal article" date="2012" name="Rejuvenation Res.">
        <title>Quinic acid could be a potential rejuvenating natural compound by improving survival of Caenorhabditis elegans under deleterious conditions.</title>
        <authorList>
            <person name="Zhang L."/>
            <person name="Zhang J."/>
            <person name="Zhao B."/>
            <person name="Zhao-Wilson X."/>
        </authorList>
    </citation>
    <scope>INDUCTION BY QUINIC ACID</scope>
</reference>
<reference key="39">
    <citation type="journal article" date="2013" name="Cell Rep.">
        <title>Insulin/IGF-1 signaling regulates proteasome activity through the deubiquitinating enzyme UBH-4.</title>
        <authorList>
            <person name="Matilainen O."/>
            <person name="Arpalahti L."/>
            <person name="Rantanen V."/>
            <person name="Hautaniemi S."/>
            <person name="Holmberg C.I."/>
        </authorList>
    </citation>
    <scope>FUNCTION</scope>
    <scope>DISRUPTION PHENOTYPE</scope>
</reference>
<reference key="40">
    <citation type="journal article" date="2013" name="Elife">
        <title>CAMKII and Calcineurin regulate the lifespan of Caenorhabditis elegans through the FOXO transcription factor DAF-16.</title>
        <authorList>
            <person name="Tao L."/>
            <person name="Xie Q."/>
            <person name="Ding Y.H."/>
            <person name="Li S.T."/>
            <person name="Peng S."/>
            <person name="Zhang Y.P."/>
            <person name="Tan D."/>
            <person name="Yuan Z."/>
            <person name="Dong M.Q."/>
        </authorList>
    </citation>
    <scope>INTERACTION WITH UNC-43 AND TAX-6</scope>
    <scope>SUBCELLULAR LOCATION</scope>
    <scope>PHOSPHORYLATION AT SER-319</scope>
    <scope>DISRUPTION PHENOTYPE</scope>
    <scope>MUTAGENESIS OF SER-319</scope>
</reference>
<reference key="41">
    <citation type="journal article" date="2013" name="PLoS Pathog.">
        <title>The DAF-16/FOXO transcription factor functions as a regulator of epidermal innate immunity.</title>
        <authorList>
            <person name="Zou C.G."/>
            <person name="Tu Q."/>
            <person name="Niu J."/>
            <person name="Ji X.L."/>
            <person name="Zhang K.Q."/>
        </authorList>
    </citation>
    <scope>FUNCTION</scope>
    <scope>SUBCELLULAR LOCATION</scope>
    <scope>DISRUPTION PHENOTYPE</scope>
</reference>
<reference key="42">
    <citation type="journal article" date="2014" name="Cell Metab.">
        <title>The FOXO transcription factor DAF-16 bypasses ire-1 requirement to promote endoplasmic reticulum hoymeostasis.</title>
        <authorList>
            <person name="Safra M."/>
            <person name="Fickentscher R."/>
            <person name="Levi-Ferber M."/>
            <person name="Danino Y.M."/>
            <person name="Haviv-Chesner A."/>
            <person name="Hansen M."/>
            <person name="Juven-Gershon T."/>
            <person name="Weiss M."/>
            <person name="Henis-Korenblit S."/>
        </authorList>
    </citation>
    <scope>FUNCTION</scope>
</reference>
<reference key="43">
    <citation type="journal article" date="2014" name="Genes Nutr.">
        <title>The zinc matrix metalloproteinase ZMP-2 increases survival of Caenorhabditis elegans through interference with lipoprotein absorption.</title>
        <authorList>
            <person name="Fischer M."/>
            <person name="Fitzenberger E."/>
            <person name="Kull R."/>
            <person name="Boll M."/>
            <person name="Wenzel U."/>
        </authorList>
    </citation>
    <scope>FUNCTION</scope>
    <scope>DISRUPTION PHENOTYPE</scope>
</reference>
<reference key="44">
    <citation type="journal article" date="2014" name="Longev. Healthspan">
        <title>Transcriptional regulation of Caenorhabditis elegans FOXO/DAF-16 modulates lifespan.</title>
        <authorList>
            <person name="Bansal A."/>
            <person name="Kwon E.S."/>
            <person name="Conte D. Jr."/>
            <person name="Liu H."/>
            <person name="Gilchrist M.J."/>
            <person name="MacNeil L.T."/>
            <person name="Tissenbaum H.A."/>
        </authorList>
    </citation>
    <scope>FUNCTION (ISOFORMS A; D AND F)</scope>
    <scope>DEVELOPMENTAL STAGE (ISOFORMS A; D AND F)</scope>
</reference>
<reference key="45">
    <citation type="journal article" date="2014" name="Nat. Struct. Mol. Biol.">
        <title>Caspase-activated phosphoinositide binding by CNT-1 promotes apoptosis by inhibiting the AKT pathway.</title>
        <authorList>
            <person name="Nakagawa A."/>
            <person name="Sullivan K.D."/>
            <person name="Xue D."/>
        </authorList>
    </citation>
    <scope>FUNCTION</scope>
</reference>
<reference key="46">
    <citation type="journal article" date="2014" name="PLoS Genet.">
        <title>DAF-16/FoxO directly regulates an atypical AMP-activated protein kinase gamma isoform to mediate the effects of insulin/IGF-1 signaling on aging in Caenorhabditis elegans.</title>
        <authorList>
            <person name="Tullet J.M."/>
            <person name="Araiz C."/>
            <person name="Sanders M.J."/>
            <person name="Au C."/>
            <person name="Benedetto A."/>
            <person name="Papatheodorou I."/>
            <person name="Clark E."/>
            <person name="Schmeisser K."/>
            <person name="Jones D."/>
            <person name="Schuster E.F."/>
            <person name="Thornton J.M."/>
            <person name="Gems D."/>
        </authorList>
    </citation>
    <scope>FUNCTION</scope>
</reference>
<reference key="47">
    <citation type="journal article" date="2014" name="PLoS Genet.">
        <title>The DAF-16 FOXO transcription factor regulates natc-1 to modulate stress resistance in Caenorhabditis elegans, linking insulin/IGF-1 signaling to protein N-terminal acetylation.</title>
        <authorList>
            <person name="Warnhoff K."/>
            <person name="Murphy J.T."/>
            <person name="Kumar S."/>
            <person name="Schneider D.L."/>
            <person name="Peterson M."/>
            <person name="Hsu S."/>
            <person name="Guthrie J."/>
            <person name="Robertson J.D."/>
            <person name="Kornfeld K."/>
        </authorList>
    </citation>
    <scope>FUNCTION</scope>
</reference>
<reference key="48">
    <citation type="journal article" date="2014" name="PLoS Genet.">
        <title>Feeding state, insulin and NPR-1 modulate Chemoreceptor gene expression via integration of sensory and circuit inputs.</title>
        <authorList>
            <person name="Gruner M."/>
            <person name="Nelson D."/>
            <person name="Winbush A."/>
            <person name="Hintz R."/>
            <person name="Ryu L."/>
            <person name="Chung S.H."/>
            <person name="Kim K."/>
            <person name="Gabel C.V."/>
            <person name="van der Linden A.M."/>
        </authorList>
    </citation>
    <scope>FUNCTION</scope>
    <scope>DISRUPTION PHENOTYPE</scope>
</reference>
<reference evidence="56" key="49">
    <citation type="journal article" date="2016" name="Nature">
        <title>The C. elegans adult neuronal IIS/FOXO transcriptome reveals adult phenotype regulators.</title>
        <authorList>
            <person name="Kaletsky R."/>
            <person name="Lakhina V."/>
            <person name="Arey R."/>
            <person name="Williams A."/>
            <person name="Landis J."/>
            <person name="Ashraf J."/>
            <person name="Murphy C.T."/>
        </authorList>
    </citation>
    <scope>FUNCTION</scope>
    <scope>DISRUPTION PHENOTYPE</scope>
</reference>
<reference key="50">
    <citation type="journal article" date="2017" name="Curr. Biol.">
        <title>A Non-Cell-Autonomous Role of BEC-1/BECN1/Beclin1 in Coordinating Cell-Cycle Progression and Stem Cell Proliferation during Germline Development.</title>
        <authorList>
            <person name="Ames K."/>
            <person name="Da Cunha D.S."/>
            <person name="Gonzalez B."/>
            <person name="Konta M."/>
            <person name="Lin F."/>
            <person name="Shechter G."/>
            <person name="Starikov L."/>
            <person name="Wong S."/>
            <person name="Buelow H.E."/>
            <person name="Melendez A."/>
        </authorList>
    </citation>
    <scope>FUNCTION</scope>
    <scope>DISRUPTION PHENOTYPE</scope>
</reference>
<reference key="51">
    <citation type="journal article" date="2018" name="BMC Neurosci.">
        <title>Normal sleep bouts are not essential for C. elegans survival and FoxO is important for compensatory changes in sleep.</title>
        <authorList>
            <person name="Bennett H.L."/>
            <person name="Khoruzhik Y."/>
            <person name="Hayden D."/>
            <person name="Huang H."/>
            <person name="Sanders J."/>
            <person name="Walsh M.B."/>
            <person name="Biron D."/>
            <person name="Hart A.C."/>
        </authorList>
    </citation>
    <scope>FUNCTION</scope>
</reference>
<reference key="52">
    <citation type="journal article" date="2018" name="Nat. Commun.">
        <title>Visible light reduces C. elegans longevity.</title>
        <authorList>
            <person name="De Magalhaes Filho C.D."/>
            <person name="Henriquez B."/>
            <person name="Seah N.E."/>
            <person name="Evans R.M."/>
            <person name="Lapierre L.R."/>
            <person name="Dillin A."/>
        </authorList>
    </citation>
    <scope>FUNCTION</scope>
</reference>
<reference key="53">
    <citation type="journal article" date="2019" name="Genetics">
        <title>Epidermal Remodeling in Caenorhabditis elegans Dauers Requires the Nidogen Domain Protein DEX-1.</title>
        <authorList>
            <person name="Flatt K.M."/>
            <person name="Beshers C."/>
            <person name="Unal C."/>
            <person name="Cohen J.D."/>
            <person name="Sundaram M.V."/>
            <person name="Schroeder N.E."/>
        </authorList>
    </citation>
    <scope>FUNCTION</scope>
    <scope>MUTAGENESIS OF 373-TRP--LEU-541</scope>
</reference>
<reference key="54">
    <citation type="journal article" date="2019" name="PLoS Genet.">
        <title>Myoinhibitory peptide signaling modulates aversive gustatory learning in Caenorhabditis elegans.</title>
        <authorList>
            <person name="Peymen K."/>
            <person name="Watteyne J."/>
            <person name="Borghgraef C."/>
            <person name="Van Sinay E."/>
            <person name="Beets I."/>
            <person name="Schoofs L."/>
        </authorList>
    </citation>
    <scope>FUNCTION</scope>
    <scope>DISRUPTION PHENOTYPE</scope>
</reference>
<reference evidence="56" key="55">
    <citation type="journal article" date="2019" name="Sci. Adv.">
        <title>Genetic and pharmacological interventions in the aging motor nervous system slow motor impairment and extend life span in C. elegans.</title>
        <authorList>
            <person name="Li G."/>
            <person name="Gong J."/>
            <person name="Liu J."/>
            <person name="Liu J."/>
            <person name="Li H."/>
            <person name="Hsu A.L."/>
            <person name="Liu J."/>
            <person name="Xu X.Z.S."/>
        </authorList>
    </citation>
    <scope>FUNCTION</scope>
    <scope>DISRUPTION PHENOTYPE</scope>
</reference>
<reference key="56">
    <citation type="journal article" date="2022" name="Nat. Commun.">
        <title>Histone H3K4me3 modification is a transgenerational epigenetic signal for lipid metabolism in Caenorhabditis elegans.</title>
        <authorList>
            <person name="Wan Q.L."/>
            <person name="Meng X."/>
            <person name="Wang C."/>
            <person name="Dai W."/>
            <person name="Luo Z."/>
            <person name="Yin Z."/>
            <person name="Ju Z."/>
            <person name="Fu X."/>
            <person name="Yang J."/>
            <person name="Ye Q."/>
            <person name="Zhang Z.H."/>
            <person name="Zhou Q."/>
        </authorList>
    </citation>
    <scope>FUNCTION</scope>
    <scope>DISRUPTION PHENOTYPE</scope>
</reference>
<sequence length="541" mass="59732">MQLEQKSSLHCSKCRNFLQKFSQDMQAWNCRELDSPLPSDITLHNLEPARPDSGMSFSTDFDDDFFNLDLHQQERSASFGGVTQYSQQFLREKCSFSPYFHTSLETVDSGRTSLYGSNEQCGQLGGASSNGSTAMLHTPDGSNSHQTSFPSDFRMSESPDDTVSGKKTTTRRNAWGNMSYAELITTAIMASPEKRLTLAQVYEWMVQNVPYFRDKGDSNSSAGWKNSIRHNLSLHSRFMRIQNEGAGKSSWWVINPDAKPGRNPRRTRERSNTIETTTKAQLEKSRRGAKKRIKERALMGSLHSTLNGNSIAGSIQTISHDLYDDDSMQGAFDNVPSSFRPRTQSNLSIPGSSSRVSPAIGSDIYDDLEFPSWVGESVPAIPSDIVDRTDQMRIDATTHIGGVQIKQESKPIKTEPIAPPPSYHELNSVRGSCAQNPLLRNPIVPSTNFKPMPLPGAYGNYQNGGITPINWLSTSNSSPLPGIQSCGIVAAQHTVASSSALPIDLENLTLPDQPLMDTMDVDALIRHELSQAGGQHIHFDL</sequence>
<organism>
    <name type="scientific">Caenorhabditis elegans</name>
    <dbReference type="NCBI Taxonomy" id="6239"/>
    <lineage>
        <taxon>Eukaryota</taxon>
        <taxon>Metazoa</taxon>
        <taxon>Ecdysozoa</taxon>
        <taxon>Nematoda</taxon>
        <taxon>Chromadorea</taxon>
        <taxon>Rhabditida</taxon>
        <taxon>Rhabditina</taxon>
        <taxon>Rhabditomorpha</taxon>
        <taxon>Rhabditoidea</taxon>
        <taxon>Rhabditidae</taxon>
        <taxon>Peloderinae</taxon>
        <taxon>Caenorhabditis</taxon>
    </lineage>
</organism>
<accession>O16850</accession>
<accession>F3NWW7</accession>
<accession>F3NWX0</accession>
<accession>G4RQR7</accession>
<accession>G4S686</accession>
<accession>G4SKG3</accession>
<accession>G4SKH0</accession>
<accession>O16849</accession>
<accession>O18676</accession>
<accession>Q86S42</accession>
<dbReference type="EMBL" id="AF020342">
    <property type="protein sequence ID" value="AAB84390.1"/>
    <property type="molecule type" value="mRNA"/>
</dbReference>
<dbReference type="EMBL" id="AF020343">
    <property type="protein sequence ID" value="AAB84391.1"/>
    <property type="molecule type" value="mRNA"/>
</dbReference>
<dbReference type="EMBL" id="AF020344">
    <property type="protein sequence ID" value="AAB84392.1"/>
    <property type="molecule type" value="mRNA"/>
</dbReference>
<dbReference type="EMBL" id="AF032112">
    <property type="protein sequence ID" value="AAC47803.1"/>
    <property type="molecule type" value="mRNA"/>
</dbReference>
<dbReference type="EMBL" id="BX284601">
    <property type="protein sequence ID" value="CCD71850.1"/>
    <property type="molecule type" value="Genomic_DNA"/>
</dbReference>
<dbReference type="EMBL" id="BX284601">
    <property type="protein sequence ID" value="CCD71851.1"/>
    <property type="molecule type" value="Genomic_DNA"/>
</dbReference>
<dbReference type="EMBL" id="BX284601">
    <property type="protein sequence ID" value="CCD71852.1"/>
    <property type="molecule type" value="Genomic_DNA"/>
</dbReference>
<dbReference type="EMBL" id="BX284601">
    <property type="protein sequence ID" value="CCD71853.1"/>
    <property type="molecule type" value="Genomic_DNA"/>
</dbReference>
<dbReference type="EMBL" id="BX284601">
    <property type="protein sequence ID" value="CCD71855.1"/>
    <property type="molecule type" value="Genomic_DNA"/>
</dbReference>
<dbReference type="EMBL" id="FO080113">
    <property type="protein sequence ID" value="CCD71855.1"/>
    <property type="status" value="JOINED"/>
    <property type="molecule type" value="Genomic_DNA"/>
</dbReference>
<dbReference type="EMBL" id="BX284601">
    <property type="protein sequence ID" value="CCD71856.1"/>
    <property type="molecule type" value="Genomic_DNA"/>
</dbReference>
<dbReference type="EMBL" id="FO080113">
    <property type="protein sequence ID" value="CCD71856.1"/>
    <property type="status" value="JOINED"/>
    <property type="molecule type" value="Genomic_DNA"/>
</dbReference>
<dbReference type="EMBL" id="BX284601">
    <property type="protein sequence ID" value="CCD71857.1"/>
    <property type="molecule type" value="Genomic_DNA"/>
</dbReference>
<dbReference type="EMBL" id="FO080113">
    <property type="protein sequence ID" value="CCD71857.1"/>
    <property type="status" value="JOINED"/>
    <property type="molecule type" value="Genomic_DNA"/>
</dbReference>
<dbReference type="PIR" id="T42234">
    <property type="entry name" value="T42234"/>
</dbReference>
<dbReference type="PIR" id="T42255">
    <property type="entry name" value="T42255"/>
</dbReference>
<dbReference type="RefSeq" id="NP_001021593.1">
    <molecule id="O16850-2"/>
    <property type="nucleotide sequence ID" value="NM_001026422.6"/>
</dbReference>
<dbReference type="RefSeq" id="NP_001021594.1">
    <property type="nucleotide sequence ID" value="NM_001026423.4"/>
</dbReference>
<dbReference type="RefSeq" id="NP_001021595.1">
    <property type="nucleotide sequence ID" value="NM_001026424.4"/>
</dbReference>
<dbReference type="RefSeq" id="NP_001021596.1">
    <molecule id="O16850-5"/>
    <property type="nucleotide sequence ID" value="NM_001026425.6"/>
</dbReference>
<dbReference type="RefSeq" id="NP_001021597.1">
    <property type="nucleotide sequence ID" value="NM_001026426.2"/>
</dbReference>
<dbReference type="RefSeq" id="NP_001021598.2">
    <molecule id="O16850-1"/>
    <property type="nucleotide sequence ID" value="NM_001026427.7"/>
</dbReference>
<dbReference type="RefSeq" id="NP_001251490.1">
    <property type="nucleotide sequence ID" value="NM_001264561.1"/>
</dbReference>
<dbReference type="RefSeq" id="NP_001364784.1">
    <molecule id="O16850-4"/>
    <property type="nucleotide sequence ID" value="NM_001377628.3"/>
</dbReference>
<dbReference type="RefSeq" id="NP_001364785.1">
    <molecule id="O16850-3"/>
    <property type="nucleotide sequence ID" value="NM_001377627.2"/>
</dbReference>
<dbReference type="RefSeq" id="NP_001367892.1">
    <molecule id="O16850-6"/>
    <property type="nucleotide sequence ID" value="NM_001381210.1"/>
</dbReference>
<dbReference type="RefSeq" id="NP_001367893.1">
    <molecule id="O16850-8"/>
    <property type="nucleotide sequence ID" value="NM_001381205.1"/>
</dbReference>
<dbReference type="SMR" id="O16850"/>
<dbReference type="BioGRID" id="38392">
    <property type="interactions" value="70"/>
</dbReference>
<dbReference type="ComplexPortal" id="CPX-3882">
    <property type="entry name" value="daf-16-ftt-2 complex"/>
</dbReference>
<dbReference type="ComplexPortal" id="CPX-3883">
    <property type="entry name" value="daf-16-sir-2.1 complex"/>
</dbReference>
<dbReference type="ComplexPortal" id="CPX-3884">
    <property type="entry name" value="daf-16-par-5 complex"/>
</dbReference>
<dbReference type="DIP" id="DIP-25581N"/>
<dbReference type="FunCoup" id="O16850">
    <property type="interactions" value="320"/>
</dbReference>
<dbReference type="IntAct" id="O16850">
    <property type="interactions" value="23"/>
</dbReference>
<dbReference type="STRING" id="6239.R13H8.1h.1"/>
<dbReference type="iPTMnet" id="O16850"/>
<dbReference type="PaxDb" id="6239-R13H8.1h"/>
<dbReference type="PeptideAtlas" id="O16850"/>
<dbReference type="EnsemblMetazoa" id="R13H8.1a.1">
    <molecule id="O16850-2"/>
    <property type="protein sequence ID" value="R13H8.1a.1"/>
    <property type="gene ID" value="WBGene00000912"/>
</dbReference>
<dbReference type="EnsemblMetazoa" id="R13H8.1b.1">
    <molecule id="O16850-4"/>
    <property type="protein sequence ID" value="R13H8.1b.1"/>
    <property type="gene ID" value="WBGene00000912"/>
</dbReference>
<dbReference type="EnsemblMetazoa" id="R13H8.1c.1">
    <molecule id="O16850-3"/>
    <property type="protein sequence ID" value="R13H8.1c.1"/>
    <property type="gene ID" value="WBGene00000912"/>
</dbReference>
<dbReference type="EnsemblMetazoa" id="R13H8.1d.1">
    <molecule id="O16850-5"/>
    <property type="protein sequence ID" value="R13H8.1d.1"/>
    <property type="gene ID" value="WBGene00000912"/>
</dbReference>
<dbReference type="EnsemblMetazoa" id="R13H8.1e.1">
    <molecule id="O16850-6"/>
    <property type="protein sequence ID" value="R13H8.1e.1"/>
    <property type="gene ID" value="WBGene00000912"/>
</dbReference>
<dbReference type="EnsemblMetazoa" id="R13H8.1f.1">
    <molecule id="O16850-1"/>
    <property type="protein sequence ID" value="R13H8.1f.1"/>
    <property type="gene ID" value="WBGene00000912"/>
</dbReference>
<dbReference type="EnsemblMetazoa" id="R13H8.1h.1">
    <molecule id="O16850-8"/>
    <property type="protein sequence ID" value="R13H8.1h.1"/>
    <property type="gene ID" value="WBGene00000912"/>
</dbReference>
<dbReference type="GeneID" id="172981"/>
<dbReference type="KEGG" id="cel:CELE_R13H8.1"/>
<dbReference type="UCSC" id="R13H8.1c">
    <property type="organism name" value="c. elegans"/>
</dbReference>
<dbReference type="AGR" id="WB:WBGene00000912"/>
<dbReference type="CTD" id="172981"/>
<dbReference type="WormBase" id="R13H8.1a">
    <molecule id="O16850-2"/>
    <property type="protein sequence ID" value="CE28771"/>
    <property type="gene ID" value="WBGene00000912"/>
    <property type="gene designation" value="daf-16"/>
</dbReference>
<dbReference type="WormBase" id="R13H8.1b">
    <molecule id="O16850-4"/>
    <property type="protein sequence ID" value="CE28772"/>
    <property type="gene ID" value="WBGene00000912"/>
    <property type="gene designation" value="daf-16"/>
</dbReference>
<dbReference type="WormBase" id="R13H8.1c">
    <molecule id="O16850-3"/>
    <property type="protein sequence ID" value="CE28773"/>
    <property type="gene ID" value="WBGene00000912"/>
    <property type="gene designation" value="daf-16"/>
</dbReference>
<dbReference type="WormBase" id="R13H8.1d">
    <molecule id="O16850-5"/>
    <property type="protein sequence ID" value="CE38722"/>
    <property type="gene ID" value="WBGene00000912"/>
    <property type="gene designation" value="daf-16"/>
</dbReference>
<dbReference type="WormBase" id="R13H8.1e">
    <molecule id="O16850-6"/>
    <property type="protein sequence ID" value="CE33160"/>
    <property type="gene ID" value="WBGene00000912"/>
    <property type="gene designation" value="daf-16"/>
</dbReference>
<dbReference type="WormBase" id="R13H8.1f">
    <molecule id="O16850-1"/>
    <property type="protein sequence ID" value="CE44821"/>
    <property type="gene ID" value="WBGene00000912"/>
    <property type="gene designation" value="daf-16"/>
</dbReference>
<dbReference type="WormBase" id="R13H8.1h">
    <molecule id="O16850-8"/>
    <property type="protein sequence ID" value="CE45185"/>
    <property type="gene ID" value="WBGene00000912"/>
    <property type="gene designation" value="daf-16"/>
</dbReference>
<dbReference type="eggNOG" id="KOG2294">
    <property type="taxonomic scope" value="Eukaryota"/>
</dbReference>
<dbReference type="GeneTree" id="ENSGT00940000170843"/>
<dbReference type="InParanoid" id="O16850"/>
<dbReference type="OMA" id="FSANIAY"/>
<dbReference type="OrthoDB" id="5954824at2759"/>
<dbReference type="PhylomeDB" id="O16850"/>
<dbReference type="Reactome" id="R-CEL-1181150">
    <property type="pathway name" value="Signaling by NODAL"/>
</dbReference>
<dbReference type="Reactome" id="R-CEL-198693">
    <property type="pathway name" value="AKT phosphorylates targets in the nucleus"/>
</dbReference>
<dbReference type="Reactome" id="R-CEL-211163">
    <property type="pathway name" value="AKT-mediated inactivation of FOXO1A"/>
</dbReference>
<dbReference type="Reactome" id="R-CEL-5687128">
    <property type="pathway name" value="MAPK6/MAPK4 signaling"/>
</dbReference>
<dbReference type="Reactome" id="R-CEL-5689880">
    <property type="pathway name" value="Ub-specific processing proteases"/>
</dbReference>
<dbReference type="Reactome" id="R-CEL-9607240">
    <property type="pathway name" value="FLT3 Signaling"/>
</dbReference>
<dbReference type="Reactome" id="R-CEL-9614399">
    <property type="pathway name" value="Regulation of localization of FOXO transcription factors"/>
</dbReference>
<dbReference type="Reactome" id="R-CEL-9615017">
    <property type="pathway name" value="FOXO-mediated transcription of oxidative stress, metabolic and neuronal genes"/>
</dbReference>
<dbReference type="Reactome" id="R-CEL-9617629">
    <property type="pathway name" value="Regulation of FOXO transcriptional activity by acetylation"/>
</dbReference>
<dbReference type="Reactome" id="R-CEL-9617828">
    <property type="pathway name" value="FOXO-mediated transcription of cell cycle genes"/>
</dbReference>
<dbReference type="Reactome" id="R-CEL-9634638">
    <property type="pathway name" value="Estrogen-dependent nuclear events downstream of ESR-membrane signaling"/>
</dbReference>
<dbReference type="Reactome" id="R-CEL-9841251">
    <property type="pathway name" value="Mitochondrial unfolded protein response (UPRmt)"/>
</dbReference>
<dbReference type="SignaLink" id="O16850"/>
<dbReference type="PRO" id="PR:O16850"/>
<dbReference type="Proteomes" id="UP000001940">
    <property type="component" value="Chromosome I"/>
</dbReference>
<dbReference type="Bgee" id="WBGene00000912">
    <property type="expression patterns" value="Expressed in larva and 5 other cell types or tissues"/>
</dbReference>
<dbReference type="ExpressionAtlas" id="O16850">
    <property type="expression patterns" value="baseline and differential"/>
</dbReference>
<dbReference type="GO" id="GO:0005737">
    <property type="term" value="C:cytoplasm"/>
    <property type="evidence" value="ECO:0000314"/>
    <property type="project" value="UniProtKB"/>
</dbReference>
<dbReference type="GO" id="GO:0005829">
    <property type="term" value="C:cytosol"/>
    <property type="evidence" value="ECO:0000314"/>
    <property type="project" value="UniProtKB"/>
</dbReference>
<dbReference type="GO" id="GO:0005634">
    <property type="term" value="C:nucleus"/>
    <property type="evidence" value="ECO:0000314"/>
    <property type="project" value="UniProtKB"/>
</dbReference>
<dbReference type="GO" id="GO:0071889">
    <property type="term" value="F:14-3-3 protein binding"/>
    <property type="evidence" value="ECO:0000353"/>
    <property type="project" value="UniProtKB"/>
</dbReference>
<dbReference type="GO" id="GO:0008013">
    <property type="term" value="F:beta-catenin binding"/>
    <property type="evidence" value="ECO:0000353"/>
    <property type="project" value="ParkinsonsUK-UCL"/>
</dbReference>
<dbReference type="GO" id="GO:0017151">
    <property type="term" value="F:DEAD/H-box RNA helicase binding"/>
    <property type="evidence" value="ECO:0000353"/>
    <property type="project" value="WormBase"/>
</dbReference>
<dbReference type="GO" id="GO:0001228">
    <property type="term" value="F:DNA-binding transcription activator activity, RNA polymerase II-specific"/>
    <property type="evidence" value="ECO:0000314"/>
    <property type="project" value="WormBase"/>
</dbReference>
<dbReference type="GO" id="GO:0003700">
    <property type="term" value="F:DNA-binding transcription factor activity"/>
    <property type="evidence" value="ECO:0000314"/>
    <property type="project" value="UniProtKB"/>
</dbReference>
<dbReference type="GO" id="GO:0000981">
    <property type="term" value="F:DNA-binding transcription factor activity, RNA polymerase II-specific"/>
    <property type="evidence" value="ECO:0000315"/>
    <property type="project" value="UniProtKB"/>
</dbReference>
<dbReference type="GO" id="GO:0140297">
    <property type="term" value="F:DNA-binding transcription factor binding"/>
    <property type="evidence" value="ECO:0000353"/>
    <property type="project" value="UniProtKB"/>
</dbReference>
<dbReference type="GO" id="GO:0019899">
    <property type="term" value="F:enzyme binding"/>
    <property type="evidence" value="ECO:0000353"/>
    <property type="project" value="WormBase"/>
</dbReference>
<dbReference type="GO" id="GO:0000978">
    <property type="term" value="F:RNA polymerase II cis-regulatory region sequence-specific DNA binding"/>
    <property type="evidence" value="ECO:0000314"/>
    <property type="project" value="UniProtKB"/>
</dbReference>
<dbReference type="GO" id="GO:0031625">
    <property type="term" value="F:ubiquitin protein ligase binding"/>
    <property type="evidence" value="ECO:0000353"/>
    <property type="project" value="UniProtKB"/>
</dbReference>
<dbReference type="GO" id="GO:1990381">
    <property type="term" value="F:ubiquitin-specific protease binding"/>
    <property type="evidence" value="ECO:0000353"/>
    <property type="project" value="WormBase"/>
</dbReference>
<dbReference type="GO" id="GO:0034605">
    <property type="term" value="P:cellular response to heat"/>
    <property type="evidence" value="ECO:0000314"/>
    <property type="project" value="UniProtKB"/>
</dbReference>
<dbReference type="GO" id="GO:0034599">
    <property type="term" value="P:cellular response to oxidative stress"/>
    <property type="evidence" value="ECO:0000316"/>
    <property type="project" value="ParkinsonsUK-UCL"/>
</dbReference>
<dbReference type="GO" id="GO:0040024">
    <property type="term" value="P:dauer larval development"/>
    <property type="evidence" value="ECO:0000316"/>
    <property type="project" value="WormBase"/>
</dbReference>
<dbReference type="GO" id="GO:0050829">
    <property type="term" value="P:defense response to Gram-negative bacterium"/>
    <property type="evidence" value="ECO:0000315"/>
    <property type="project" value="WormBase"/>
</dbReference>
<dbReference type="GO" id="GO:0050830">
    <property type="term" value="P:defense response to Gram-positive bacterium"/>
    <property type="evidence" value="ECO:0000315"/>
    <property type="project" value="UniProtKB"/>
</dbReference>
<dbReference type="GO" id="GO:0008340">
    <property type="term" value="P:determination of adult lifespan"/>
    <property type="evidence" value="ECO:0000314"/>
    <property type="project" value="UniProtKB"/>
</dbReference>
<dbReference type="GO" id="GO:0006974">
    <property type="term" value="P:DNA damage response"/>
    <property type="evidence" value="ECO:0000314"/>
    <property type="project" value="UniProtKB"/>
</dbReference>
<dbReference type="GO" id="GO:0010286">
    <property type="term" value="P:heat acclimation"/>
    <property type="evidence" value="ECO:0000316"/>
    <property type="project" value="UniProtKB"/>
</dbReference>
<dbReference type="GO" id="GO:0045087">
    <property type="term" value="P:innate immune response"/>
    <property type="evidence" value="ECO:0000315"/>
    <property type="project" value="WormBase"/>
</dbReference>
<dbReference type="GO" id="GO:0008286">
    <property type="term" value="P:insulin receptor signaling pathway"/>
    <property type="evidence" value="ECO:0000314"/>
    <property type="project" value="WormBase"/>
</dbReference>
<dbReference type="GO" id="GO:0035556">
    <property type="term" value="P:intracellular signal transduction"/>
    <property type="evidence" value="ECO:0000315"/>
    <property type="project" value="UniProtKB"/>
</dbReference>
<dbReference type="GO" id="GO:0051457">
    <property type="term" value="P:maintenance of protein location in nucleus"/>
    <property type="evidence" value="ECO:0000303"/>
    <property type="project" value="ComplexPortal"/>
</dbReference>
<dbReference type="GO" id="GO:0060537">
    <property type="term" value="P:muscle tissue development"/>
    <property type="evidence" value="ECO:0000315"/>
    <property type="project" value="UniProtKB"/>
</dbReference>
<dbReference type="GO" id="GO:0010629">
    <property type="term" value="P:negative regulation of gene expression"/>
    <property type="evidence" value="ECO:0000303"/>
    <property type="project" value="ComplexPortal"/>
</dbReference>
<dbReference type="GO" id="GO:0040015">
    <property type="term" value="P:negative regulation of multicellular organism growth"/>
    <property type="evidence" value="ECO:0000315"/>
    <property type="project" value="WormBase"/>
</dbReference>
<dbReference type="GO" id="GO:0000122">
    <property type="term" value="P:negative regulation of transcription by RNA polymerase II"/>
    <property type="evidence" value="ECO:0000315"/>
    <property type="project" value="UniProtKB"/>
</dbReference>
<dbReference type="GO" id="GO:0002119">
    <property type="term" value="P:nematode larval development"/>
    <property type="evidence" value="ECO:0000315"/>
    <property type="project" value="UniProtKB"/>
</dbReference>
<dbReference type="GO" id="GO:0002821">
    <property type="term" value="P:positive regulation of adaptive immune response"/>
    <property type="evidence" value="ECO:0000315"/>
    <property type="project" value="UniProtKB"/>
</dbReference>
<dbReference type="GO" id="GO:0043065">
    <property type="term" value="P:positive regulation of apoptotic process"/>
    <property type="evidence" value="ECO:0000315"/>
    <property type="project" value="UniProtKB"/>
</dbReference>
<dbReference type="GO" id="GO:0061066">
    <property type="term" value="P:positive regulation of dauer larval development"/>
    <property type="evidence" value="ECO:0000315"/>
    <property type="project" value="WormBase"/>
</dbReference>
<dbReference type="GO" id="GO:1900426">
    <property type="term" value="P:positive regulation of defense response to bacterium"/>
    <property type="evidence" value="ECO:0000315"/>
    <property type="project" value="UniProtKB"/>
</dbReference>
<dbReference type="GO" id="GO:0010628">
    <property type="term" value="P:positive regulation of gene expression"/>
    <property type="evidence" value="ECO:0000315"/>
    <property type="project" value="UniProtKB"/>
</dbReference>
<dbReference type="GO" id="GO:1900075">
    <property type="term" value="P:positive regulation of neuromuscular synaptic transmission"/>
    <property type="evidence" value="ECO:0000316"/>
    <property type="project" value="UniProtKB"/>
</dbReference>
<dbReference type="GO" id="GO:0032436">
    <property type="term" value="P:positive regulation of proteasomal ubiquitin-dependent protein catabolic process"/>
    <property type="evidence" value="ECO:0000315"/>
    <property type="project" value="UniProtKB"/>
</dbReference>
<dbReference type="GO" id="GO:0045887">
    <property type="term" value="P:positive regulation of synaptic assembly at neuromuscular junction"/>
    <property type="evidence" value="ECO:0000316"/>
    <property type="project" value="UniProtKB"/>
</dbReference>
<dbReference type="GO" id="GO:0045944">
    <property type="term" value="P:positive regulation of transcription by RNA polymerase II"/>
    <property type="evidence" value="ECO:0000314"/>
    <property type="project" value="WormBase"/>
</dbReference>
<dbReference type="GO" id="GO:0010564">
    <property type="term" value="P:regulation of cell cycle process"/>
    <property type="evidence" value="ECO:0000270"/>
    <property type="project" value="UniProtKB"/>
</dbReference>
<dbReference type="GO" id="GO:1905909">
    <property type="term" value="P:regulation of dauer entry"/>
    <property type="evidence" value="ECO:0000316"/>
    <property type="project" value="UniProtKB"/>
</dbReference>
<dbReference type="GO" id="GO:0061065">
    <property type="term" value="P:regulation of dauer larval development"/>
    <property type="evidence" value="ECO:0000316"/>
    <property type="project" value="UniProtKB"/>
</dbReference>
<dbReference type="GO" id="GO:0006355">
    <property type="term" value="P:regulation of DNA-templated transcription"/>
    <property type="evidence" value="ECO:0000314"/>
    <property type="project" value="UniProtKB"/>
</dbReference>
<dbReference type="GO" id="GO:0010468">
    <property type="term" value="P:regulation of gene expression"/>
    <property type="evidence" value="ECO:0000315"/>
    <property type="project" value="UniProtKB"/>
</dbReference>
<dbReference type="GO" id="GO:0046890">
    <property type="term" value="P:regulation of lipid biosynthetic process"/>
    <property type="evidence" value="ECO:0000315"/>
    <property type="project" value="UniProtKB"/>
</dbReference>
<dbReference type="GO" id="GO:0010883">
    <property type="term" value="P:regulation of lipid storage"/>
    <property type="evidence" value="ECO:0000316"/>
    <property type="project" value="UniProtKB"/>
</dbReference>
<dbReference type="GO" id="GO:0008582">
    <property type="term" value="P:regulation of synaptic assembly at neuromuscular junction"/>
    <property type="evidence" value="ECO:0000316"/>
    <property type="project" value="UniProtKB"/>
</dbReference>
<dbReference type="GO" id="GO:0006357">
    <property type="term" value="P:regulation of transcription by RNA polymerase II"/>
    <property type="evidence" value="ECO:0000318"/>
    <property type="project" value="GO_Central"/>
</dbReference>
<dbReference type="GO" id="GO:0006979">
    <property type="term" value="P:response to oxidative stress"/>
    <property type="evidence" value="ECO:0000316"/>
    <property type="project" value="UniProtKB"/>
</dbReference>
<dbReference type="GO" id="GO:0042594">
    <property type="term" value="P:response to starvation"/>
    <property type="evidence" value="ECO:0000315"/>
    <property type="project" value="UniProtKB"/>
</dbReference>
<dbReference type="GO" id="GO:0009411">
    <property type="term" value="P:response to UV"/>
    <property type="evidence" value="ECO:0000314"/>
    <property type="project" value="UniProtKB"/>
</dbReference>
<dbReference type="GO" id="GO:0007614">
    <property type="term" value="P:short-term memory"/>
    <property type="evidence" value="ECO:0000316"/>
    <property type="project" value="WormBase"/>
</dbReference>
<dbReference type="GO" id="GO:0030431">
    <property type="term" value="P:sleep"/>
    <property type="evidence" value="ECO:0000316"/>
    <property type="project" value="UniProtKB"/>
</dbReference>
<dbReference type="CDD" id="cd20032">
    <property type="entry name" value="FH_FOXO"/>
    <property type="match status" value="1"/>
</dbReference>
<dbReference type="FunFam" id="1.10.10.10:FF:000032">
    <property type="entry name" value="Forkhead box protein O4"/>
    <property type="match status" value="1"/>
</dbReference>
<dbReference type="Gene3D" id="1.10.10.10">
    <property type="entry name" value="Winged helix-like DNA-binding domain superfamily/Winged helix DNA-binding domain"/>
    <property type="match status" value="1"/>
</dbReference>
<dbReference type="InterPro" id="IPR001766">
    <property type="entry name" value="Fork_head_dom"/>
</dbReference>
<dbReference type="InterPro" id="IPR030456">
    <property type="entry name" value="TF_fork_head_CS_2"/>
</dbReference>
<dbReference type="InterPro" id="IPR036388">
    <property type="entry name" value="WH-like_DNA-bd_sf"/>
</dbReference>
<dbReference type="InterPro" id="IPR036390">
    <property type="entry name" value="WH_DNA-bd_sf"/>
</dbReference>
<dbReference type="PANTHER" id="PTHR45767">
    <property type="entry name" value="FORKHEAD BOX PROTEIN O"/>
    <property type="match status" value="1"/>
</dbReference>
<dbReference type="PANTHER" id="PTHR45767:SF2">
    <property type="entry name" value="FORKHEAD BOX PROTEIN O"/>
    <property type="match status" value="1"/>
</dbReference>
<dbReference type="Pfam" id="PF00250">
    <property type="entry name" value="Forkhead"/>
    <property type="match status" value="1"/>
</dbReference>
<dbReference type="PRINTS" id="PR00053">
    <property type="entry name" value="FORKHEAD"/>
</dbReference>
<dbReference type="SMART" id="SM00339">
    <property type="entry name" value="FH"/>
    <property type="match status" value="1"/>
</dbReference>
<dbReference type="SUPFAM" id="SSF46785">
    <property type="entry name" value="Winged helix' DNA-binding domain"/>
    <property type="match status" value="1"/>
</dbReference>
<dbReference type="PROSITE" id="PS00658">
    <property type="entry name" value="FORK_HEAD_2"/>
    <property type="match status" value="1"/>
</dbReference>
<dbReference type="PROSITE" id="PS50039">
    <property type="entry name" value="FORK_HEAD_3"/>
    <property type="match status" value="1"/>
</dbReference>